<dbReference type="EMBL" id="S79680">
    <property type="protein sequence ID" value="AAB35371.1"/>
    <property type="molecule type" value="mRNA"/>
</dbReference>
<dbReference type="RefSeq" id="XP_015713222.1">
    <molecule id="P67965-1"/>
    <property type="nucleotide sequence ID" value="XM_015857736.1"/>
</dbReference>
<dbReference type="RefSeq" id="XP_015713224.1">
    <molecule id="P67965-2"/>
    <property type="nucleotide sequence ID" value="XM_015857738.1"/>
</dbReference>
<dbReference type="RefSeq" id="XP_015713227.1">
    <molecule id="P67965-4"/>
    <property type="nucleotide sequence ID" value="XM_015857741.1"/>
</dbReference>
<dbReference type="SMR" id="P67965"/>
<dbReference type="GlyCosmos" id="P67965">
    <property type="glycosylation" value="1 site, No reported glycans"/>
</dbReference>
<dbReference type="Ensembl" id="ENSCJPT00005019283.1">
    <molecule id="P67965-1"/>
    <property type="protein sequence ID" value="ENSCJPP00005013421.1"/>
    <property type="gene ID" value="ENSCJPG00005011306.1"/>
</dbReference>
<dbReference type="Ensembl" id="ENSCJPT00005019285.1">
    <molecule id="P67965-2"/>
    <property type="protein sequence ID" value="ENSCJPP00005013423.1"/>
    <property type="gene ID" value="ENSCJPG00005011306.1"/>
</dbReference>
<dbReference type="Ensembl" id="ENSCJPT00005019286.1">
    <molecule id="P67965-3"/>
    <property type="protein sequence ID" value="ENSCJPP00005013424.1"/>
    <property type="gene ID" value="ENSCJPG00005011306.1"/>
</dbReference>
<dbReference type="Ensembl" id="ENSCJPT00005019287.1">
    <molecule id="P67965-4"/>
    <property type="protein sequence ID" value="ENSCJPP00005013425.1"/>
    <property type="gene ID" value="ENSCJPG00005011306.1"/>
</dbReference>
<dbReference type="GeneID" id="107311307"/>
<dbReference type="KEGG" id="cjo:107311307"/>
<dbReference type="CTD" id="7422"/>
<dbReference type="GeneTree" id="ENSGT00940000157284"/>
<dbReference type="OrthoDB" id="6370328at2759"/>
<dbReference type="Proteomes" id="UP000694412">
    <property type="component" value="Chromosome 3"/>
</dbReference>
<dbReference type="GO" id="GO:0009986">
    <property type="term" value="C:cell surface"/>
    <property type="evidence" value="ECO:0000304"/>
    <property type="project" value="Roslin"/>
</dbReference>
<dbReference type="GO" id="GO:0005576">
    <property type="term" value="C:extracellular region"/>
    <property type="evidence" value="ECO:0000303"/>
    <property type="project" value="Roslin"/>
</dbReference>
<dbReference type="GO" id="GO:0005615">
    <property type="term" value="C:extracellular space"/>
    <property type="evidence" value="ECO:0007669"/>
    <property type="project" value="TreeGrafter"/>
</dbReference>
<dbReference type="GO" id="GO:0016020">
    <property type="term" value="C:membrane"/>
    <property type="evidence" value="ECO:0007669"/>
    <property type="project" value="InterPro"/>
</dbReference>
<dbReference type="GO" id="GO:0042056">
    <property type="term" value="F:chemoattractant activity"/>
    <property type="evidence" value="ECO:0007669"/>
    <property type="project" value="TreeGrafter"/>
</dbReference>
<dbReference type="GO" id="GO:0008083">
    <property type="term" value="F:growth factor activity"/>
    <property type="evidence" value="ECO:0000314"/>
    <property type="project" value="Roslin"/>
</dbReference>
<dbReference type="GO" id="GO:0008201">
    <property type="term" value="F:heparin binding"/>
    <property type="evidence" value="ECO:0007669"/>
    <property type="project" value="UniProtKB-KW"/>
</dbReference>
<dbReference type="GO" id="GO:0005172">
    <property type="term" value="F:vascular endothelial growth factor receptor binding"/>
    <property type="evidence" value="ECO:0000304"/>
    <property type="project" value="Roslin"/>
</dbReference>
<dbReference type="GO" id="GO:0001955">
    <property type="term" value="P:blood vessel maturation"/>
    <property type="evidence" value="ECO:0000314"/>
    <property type="project" value="Roslin"/>
</dbReference>
<dbReference type="GO" id="GO:0030154">
    <property type="term" value="P:cell differentiation"/>
    <property type="evidence" value="ECO:0007669"/>
    <property type="project" value="UniProtKB-KW"/>
</dbReference>
<dbReference type="GO" id="GO:0007267">
    <property type="term" value="P:cell-cell signaling"/>
    <property type="evidence" value="ECO:0000304"/>
    <property type="project" value="Roslin"/>
</dbReference>
<dbReference type="GO" id="GO:0050930">
    <property type="term" value="P:induction of positive chemotaxis"/>
    <property type="evidence" value="ECO:0007669"/>
    <property type="project" value="TreeGrafter"/>
</dbReference>
<dbReference type="GO" id="GO:0045766">
    <property type="term" value="P:positive regulation of angiogenesis"/>
    <property type="evidence" value="ECO:0000314"/>
    <property type="project" value="Roslin"/>
</dbReference>
<dbReference type="GO" id="GO:0051781">
    <property type="term" value="P:positive regulation of cell division"/>
    <property type="evidence" value="ECO:0007669"/>
    <property type="project" value="UniProtKB-KW"/>
</dbReference>
<dbReference type="GO" id="GO:0010595">
    <property type="term" value="P:positive regulation of endothelial cell migration"/>
    <property type="evidence" value="ECO:0000250"/>
    <property type="project" value="UniProtKB"/>
</dbReference>
<dbReference type="GO" id="GO:0001938">
    <property type="term" value="P:positive regulation of endothelial cell proliferation"/>
    <property type="evidence" value="ECO:0000250"/>
    <property type="project" value="UniProtKB"/>
</dbReference>
<dbReference type="GO" id="GO:0051894">
    <property type="term" value="P:positive regulation of focal adhesion assembly"/>
    <property type="evidence" value="ECO:0000250"/>
    <property type="project" value="UniProtKB"/>
</dbReference>
<dbReference type="GO" id="GO:0060754">
    <property type="term" value="P:positive regulation of mast cell chemotaxis"/>
    <property type="evidence" value="ECO:0007669"/>
    <property type="project" value="TreeGrafter"/>
</dbReference>
<dbReference type="GO" id="GO:0050731">
    <property type="term" value="P:positive regulation of peptidyl-tyrosine phosphorylation"/>
    <property type="evidence" value="ECO:0000250"/>
    <property type="project" value="UniProtKB"/>
</dbReference>
<dbReference type="GO" id="GO:0001934">
    <property type="term" value="P:positive regulation of protein phosphorylation"/>
    <property type="evidence" value="ECO:0000250"/>
    <property type="project" value="UniProtKB"/>
</dbReference>
<dbReference type="GO" id="GO:0031334">
    <property type="term" value="P:positive regulation of protein-containing complex assembly"/>
    <property type="evidence" value="ECO:0000250"/>
    <property type="project" value="UniProtKB"/>
</dbReference>
<dbReference type="GO" id="GO:0043117">
    <property type="term" value="P:positive regulation of vascular permeability"/>
    <property type="evidence" value="ECO:0000314"/>
    <property type="project" value="Roslin"/>
</dbReference>
<dbReference type="GO" id="GO:0001666">
    <property type="term" value="P:response to hypoxia"/>
    <property type="evidence" value="ECO:0007669"/>
    <property type="project" value="TreeGrafter"/>
</dbReference>
<dbReference type="GO" id="GO:0002040">
    <property type="term" value="P:sprouting angiogenesis"/>
    <property type="evidence" value="ECO:0007669"/>
    <property type="project" value="TreeGrafter"/>
</dbReference>
<dbReference type="GO" id="GO:0035148">
    <property type="term" value="P:tube formation"/>
    <property type="evidence" value="ECO:0000250"/>
    <property type="project" value="UniProtKB"/>
</dbReference>
<dbReference type="GO" id="GO:0048010">
    <property type="term" value="P:vascular endothelial growth factor receptor signaling pathway"/>
    <property type="evidence" value="ECO:0000304"/>
    <property type="project" value="Roslin"/>
</dbReference>
<dbReference type="GO" id="GO:0038084">
    <property type="term" value="P:vascular endothelial growth factor signaling pathway"/>
    <property type="evidence" value="ECO:0007669"/>
    <property type="project" value="TreeGrafter"/>
</dbReference>
<dbReference type="GO" id="GO:0001570">
    <property type="term" value="P:vasculogenesis"/>
    <property type="evidence" value="ECO:0000314"/>
    <property type="project" value="Roslin"/>
</dbReference>
<dbReference type="CDD" id="cd00135">
    <property type="entry name" value="PDGF"/>
    <property type="match status" value="1"/>
</dbReference>
<dbReference type="FunFam" id="2.10.160.10:FF:000001">
    <property type="entry name" value="Vascular endothelial growth factor A"/>
    <property type="match status" value="1"/>
</dbReference>
<dbReference type="FunFam" id="2.10.90.10:FF:000009">
    <property type="entry name" value="Vascular endothelial growth factor A"/>
    <property type="match status" value="1"/>
</dbReference>
<dbReference type="Gene3D" id="2.10.90.10">
    <property type="entry name" value="Cystine-knot cytokines"/>
    <property type="match status" value="1"/>
</dbReference>
<dbReference type="Gene3D" id="2.10.160.10">
    <property type="entry name" value="Vascular endothelial growth factor, heparin-binding domain"/>
    <property type="match status" value="1"/>
</dbReference>
<dbReference type="InterPro" id="IPR029034">
    <property type="entry name" value="Cystine-knot_cytokine"/>
</dbReference>
<dbReference type="InterPro" id="IPR023581">
    <property type="entry name" value="PD_growth_factor_CS"/>
</dbReference>
<dbReference type="InterPro" id="IPR000072">
    <property type="entry name" value="PDGF/VEGF_dom"/>
</dbReference>
<dbReference type="InterPro" id="IPR050507">
    <property type="entry name" value="PDGF/VEGF_growth_factor"/>
</dbReference>
<dbReference type="InterPro" id="IPR027928">
    <property type="entry name" value="VEGF_C"/>
</dbReference>
<dbReference type="InterPro" id="IPR036841">
    <property type="entry name" value="VEGF_C_sf"/>
</dbReference>
<dbReference type="PANTHER" id="PTHR12025">
    <property type="entry name" value="VASCULAR ENDOTHELIAL GROWTH FACTOR"/>
    <property type="match status" value="1"/>
</dbReference>
<dbReference type="PANTHER" id="PTHR12025:SF5">
    <property type="entry name" value="VASCULAR ENDOTHELIAL GROWTH FACTOR A, LONG FORM"/>
    <property type="match status" value="1"/>
</dbReference>
<dbReference type="Pfam" id="PF00341">
    <property type="entry name" value="PDGF"/>
    <property type="match status" value="1"/>
</dbReference>
<dbReference type="Pfam" id="PF14554">
    <property type="entry name" value="VEGF_C"/>
    <property type="match status" value="1"/>
</dbReference>
<dbReference type="SMART" id="SM00141">
    <property type="entry name" value="PDGF"/>
    <property type="match status" value="1"/>
</dbReference>
<dbReference type="SUPFAM" id="SSF57501">
    <property type="entry name" value="Cystine-knot cytokines"/>
    <property type="match status" value="1"/>
</dbReference>
<dbReference type="SUPFAM" id="SSF57593">
    <property type="entry name" value="Heparin-binding domain from vascular endothelial growth factor"/>
    <property type="match status" value="1"/>
</dbReference>
<dbReference type="PROSITE" id="PS00249">
    <property type="entry name" value="PDGF_1"/>
    <property type="match status" value="1"/>
</dbReference>
<dbReference type="PROSITE" id="PS50278">
    <property type="entry name" value="PDGF_2"/>
    <property type="match status" value="1"/>
</dbReference>
<evidence type="ECO:0000250" key="1"/>
<evidence type="ECO:0000255" key="2"/>
<evidence type="ECO:0000256" key="3">
    <source>
        <dbReference type="SAM" id="MobiDB-lite"/>
    </source>
</evidence>
<evidence type="ECO:0000269" key="4">
    <source>
    </source>
</evidence>
<evidence type="ECO:0000269" key="5">
    <source>
    </source>
</evidence>
<evidence type="ECO:0000303" key="6">
    <source>
    </source>
</evidence>
<evidence type="ECO:0000303" key="7">
    <source>
    </source>
</evidence>
<evidence type="ECO:0000305" key="8"/>
<organism>
    <name type="scientific">Coturnix japonica</name>
    <name type="common">Japanese quail</name>
    <name type="synonym">Coturnix coturnix japonica</name>
    <dbReference type="NCBI Taxonomy" id="93934"/>
    <lineage>
        <taxon>Eukaryota</taxon>
        <taxon>Metazoa</taxon>
        <taxon>Chordata</taxon>
        <taxon>Craniata</taxon>
        <taxon>Vertebrata</taxon>
        <taxon>Euteleostomi</taxon>
        <taxon>Archelosauria</taxon>
        <taxon>Archosauria</taxon>
        <taxon>Dinosauria</taxon>
        <taxon>Saurischia</taxon>
        <taxon>Theropoda</taxon>
        <taxon>Coelurosauria</taxon>
        <taxon>Aves</taxon>
        <taxon>Neognathae</taxon>
        <taxon>Galloanserae</taxon>
        <taxon>Galliformes</taxon>
        <taxon>Phasianidae</taxon>
        <taxon>Perdicinae</taxon>
        <taxon>Coturnix</taxon>
    </lineage>
</organism>
<accession>P67965</accession>
<accession>P52582</accession>
<accession>Q91420</accession>
<feature type="signal peptide" evidence="1">
    <location>
        <begin position="1"/>
        <end position="26"/>
    </location>
</feature>
<feature type="chain" id="PRO_0000023393" description="Vascular endothelial growth factor A">
    <location>
        <begin position="27"/>
        <end position="216"/>
    </location>
</feature>
<feature type="region of interest" description="Disordered" evidence="3">
    <location>
        <begin position="132"/>
        <end position="167"/>
    </location>
</feature>
<feature type="compositionally biased region" description="Basic and acidic residues" evidence="3">
    <location>
        <begin position="132"/>
        <end position="141"/>
    </location>
</feature>
<feature type="compositionally biased region" description="Basic residues" evidence="3">
    <location>
        <begin position="142"/>
        <end position="161"/>
    </location>
</feature>
<feature type="glycosylation site" description="N-linked (GlcNAc...) asparagine" evidence="2">
    <location>
        <position position="101"/>
    </location>
</feature>
<feature type="disulfide bond" evidence="1">
    <location>
        <begin position="52"/>
        <end position="94"/>
    </location>
</feature>
<feature type="disulfide bond" description="Interchain" evidence="1">
    <location>
        <position position="77"/>
    </location>
</feature>
<feature type="disulfide bond" evidence="1">
    <location>
        <begin position="83"/>
        <end position="128"/>
    </location>
</feature>
<feature type="disulfide bond" description="Interchain" evidence="1">
    <location>
        <position position="86"/>
    </location>
</feature>
<feature type="disulfide bond" evidence="1">
    <location>
        <begin position="87"/>
        <end position="130"/>
    </location>
</feature>
<feature type="splice variant" id="VSP_004633" description="In isoform VEGF-166." evidence="6 7">
    <original>K</original>
    <variation>N</variation>
    <location>
        <position position="142"/>
    </location>
</feature>
<feature type="splice variant" id="VSP_018620" description="In isoform VEGF-122." evidence="6">
    <location>
        <begin position="143"/>
        <end position="210"/>
    </location>
</feature>
<feature type="splice variant" id="VSP_004634" description="In isoform VEGF-166." evidence="6 7">
    <location>
        <begin position="143"/>
        <end position="166"/>
    </location>
</feature>
<feature type="splice variant" id="VSP_004635" description="In isoform VEGF-146." evidence="6">
    <original>F</original>
    <variation>L</variation>
    <location>
        <position position="166"/>
    </location>
</feature>
<feature type="splice variant" id="VSP_004636" description="In isoform VEGF-146." evidence="6">
    <location>
        <begin position="167"/>
        <end position="210"/>
    </location>
</feature>
<keyword id="KW-0025">Alternative splicing</keyword>
<keyword id="KW-0037">Angiogenesis</keyword>
<keyword id="KW-0217">Developmental protein</keyword>
<keyword id="KW-0221">Differentiation</keyword>
<keyword id="KW-1015">Disulfide bond</keyword>
<keyword id="KW-0325">Glycoprotein</keyword>
<keyword id="KW-0339">Growth factor</keyword>
<keyword id="KW-0358">Heparin-binding</keyword>
<keyword id="KW-0497">Mitogen</keyword>
<keyword id="KW-1185">Reference proteome</keyword>
<keyword id="KW-0732">Signal</keyword>
<proteinExistence type="evidence at transcript level"/>
<gene>
    <name type="primary">VEGFA</name>
    <name type="synonym">VEGF</name>
</gene>
<name>VEGFA_COTJA</name>
<protein>
    <recommendedName>
        <fullName>Vascular endothelial growth factor A</fullName>
        <shortName>VEGF-A</shortName>
    </recommendedName>
    <alternativeName>
        <fullName>Vascular permeability factor</fullName>
        <shortName>VPF</shortName>
    </alternativeName>
</protein>
<reference key="1">
    <citation type="journal article" date="1995" name="Dev. Biol.">
        <title>Overexpression of vascular endothelial growth factor in the avian embryo induces hypervascularization and increased vascular permeability without alterations of embryonic pattern formation.</title>
        <authorList>
            <person name="Flamme I."/>
            <person name="von Reutern M."/>
            <person name="Drexler H.C.A."/>
            <person name="Syed-Ali S."/>
            <person name="Risau W."/>
        </authorList>
    </citation>
    <scope>NUCLEOTIDE SEQUENCE [MRNA] (ISOFORMS VEGF-122; VEGF-146; VEGF-166 AND VEGF-190)</scope>
    <scope>FUNCTION</scope>
    <source>
        <tissue>Embryo</tissue>
    </source>
</reference>
<reference key="2">
    <citation type="journal article" date="1995" name="Dev. Biol.">
        <title>Vascular endothelial growth factor (VEGF) and VEGF receptor 2 (flk-1) are expressed during vasculogenesis and vascular differentiation in the quail embryo.</title>
        <authorList>
            <person name="Flamme I."/>
            <person name="Breier G."/>
            <person name="Risau W."/>
        </authorList>
    </citation>
    <scope>NUCLEOTIDE SEQUENCE [MRNA] OF 60-187 (ISOFORMS VEGF-190 AND VEGF-166)</scope>
    <scope>TISSUE SPECIFICITY</scope>
    <scope>DEVELOPMENTAL STAGE</scope>
</reference>
<sequence>MNFLLTWIHWGLAALLYLQSAELSKAAPALGDGERKPNEVIKFLEVYERSFCRTIETLVDIFQEYPDEVEYIFRPSCVPLMRCAGCCGDEGLECVPVDVYNVTMEIARIKPHQSQHIAHMSFLQHSKCDCRPKKDVKNKQEKKSKRGKGKGQKRKRKKGRYKPPSFHCEPCSERRKHLFVQDPQTCKCSCKFTDSRCKSRQLELNERTCRCEKPRR</sequence>
<comment type="function">
    <text evidence="1 4">Growth factor active in angiogenesis, vasculogenesis and endothelial cell growth. Induces endothelial cell proliferation, promotes cell migration, inhibits apoptosis and induces permeabilization of blood vessels. Binds to the FLT1/VEGFR1 and KDR/VEGFR2 receptors, heparan sulfate and heparin (By similarity).</text>
</comment>
<comment type="subunit">
    <text evidence="1">Homodimer; disulfide-linked. Also found as heterodimer with PGF (By similarity).</text>
</comment>
<comment type="alternative products">
    <event type="alternative splicing"/>
    <isoform>
        <id>P67965-1</id>
        <id>P52582-1</id>
        <name>VEGF-190</name>
        <sequence type="displayed"/>
    </isoform>
    <isoform>
        <id>P67965-2</id>
        <id>P52582-2</id>
        <name>VEGF-166</name>
        <sequence type="described" ref="VSP_004633 VSP_004634"/>
    </isoform>
    <isoform>
        <id>P67965-3</id>
        <id>P52582-3</id>
        <name>VEGF-146</name>
        <sequence type="described" ref="VSP_004635 VSP_004636"/>
    </isoform>
    <isoform>
        <id>P67965-4</id>
        <name>VEGF-122</name>
        <sequence type="described" ref="VSP_018620"/>
    </isoform>
    <text>Additional isoforms seem to exist.</text>
</comment>
<comment type="tissue specificity">
    <text evidence="5">Widely expressed. Abundantly and equally expressed in heart and liver. In kidney glomeruli, brain and yolk sac, isoform VEGF-166 is 5- to 10-times more abundant than isoform VEGF-190.</text>
</comment>
<comment type="developmental stage">
    <text evidence="5">Isoform VEGF-166 is expressed early at day 1 and increases during gastrulation. Expression of isoform VEGF-190 is detectable only from day 2.</text>
</comment>
<comment type="domain">
    <text>Isoform VEGF-190 contains a basic insert which acts as a cell retention signal.</text>
</comment>
<comment type="similarity">
    <text evidence="8">Belongs to the PDGF/VEGF growth factor family.</text>
</comment>